<name>MTNB_XANCB</name>
<comment type="function">
    <text evidence="1">Catalyzes the dehydration of methylthioribulose-1-phosphate (MTRu-1-P) into 2,3-diketo-5-methylthiopentyl-1-phosphate (DK-MTP-1-P).</text>
</comment>
<comment type="catalytic activity">
    <reaction evidence="1">
        <text>5-(methylsulfanyl)-D-ribulose 1-phosphate = 5-methylsulfanyl-2,3-dioxopentyl phosphate + H2O</text>
        <dbReference type="Rhea" id="RHEA:15549"/>
        <dbReference type="ChEBI" id="CHEBI:15377"/>
        <dbReference type="ChEBI" id="CHEBI:58548"/>
        <dbReference type="ChEBI" id="CHEBI:58828"/>
        <dbReference type="EC" id="4.2.1.109"/>
    </reaction>
</comment>
<comment type="cofactor">
    <cofactor evidence="1">
        <name>Zn(2+)</name>
        <dbReference type="ChEBI" id="CHEBI:29105"/>
    </cofactor>
    <text evidence="1">Binds 1 zinc ion per subunit.</text>
</comment>
<comment type="pathway">
    <text evidence="1">Amino-acid biosynthesis; L-methionine biosynthesis via salvage pathway; L-methionine from S-methyl-5-thio-alpha-D-ribose 1-phosphate: step 2/6.</text>
</comment>
<comment type="similarity">
    <text evidence="1">Belongs to the aldolase class II family. MtnB subfamily.</text>
</comment>
<gene>
    <name evidence="1" type="primary">mtnB</name>
    <name type="ordered locus">xcc-b100_2107</name>
</gene>
<proteinExistence type="inferred from homology"/>
<sequence>MNATTAPLPYSAARLHELAQLLIGNIRELAQAGWTPATSSNFSHRLDEQHAAITVSGRDKGRLVEEDIMVVDFDGQPVGRPLRPSAETLLHTQLYRRFPEIGCVLHTHSPVQTIASRLYAGSGVIRLEGYELLKAFEGNTTHETAVDVLVFANTQDMQVLAAQVEALLDKQSMWGYLIEGHGLYAWGRNMAEARRHLEAFEFLLHCELELLKLRSPR</sequence>
<protein>
    <recommendedName>
        <fullName evidence="1">Methylthioribulose-1-phosphate dehydratase</fullName>
        <shortName evidence="1">MTRu-1-P dehydratase</shortName>
        <ecNumber evidence="1">4.2.1.109</ecNumber>
    </recommendedName>
</protein>
<feature type="chain" id="PRO_0000357113" description="Methylthioribulose-1-phosphate dehydratase">
    <location>
        <begin position="1"/>
        <end position="217"/>
    </location>
</feature>
<feature type="binding site" evidence="1">
    <location>
        <position position="106"/>
    </location>
    <ligand>
        <name>Zn(2+)</name>
        <dbReference type="ChEBI" id="CHEBI:29105"/>
    </ligand>
</feature>
<feature type="binding site" evidence="1">
    <location>
        <position position="108"/>
    </location>
    <ligand>
        <name>Zn(2+)</name>
        <dbReference type="ChEBI" id="CHEBI:29105"/>
    </ligand>
</feature>
<organism>
    <name type="scientific">Xanthomonas campestris pv. campestris (strain B100)</name>
    <dbReference type="NCBI Taxonomy" id="509169"/>
    <lineage>
        <taxon>Bacteria</taxon>
        <taxon>Pseudomonadati</taxon>
        <taxon>Pseudomonadota</taxon>
        <taxon>Gammaproteobacteria</taxon>
        <taxon>Lysobacterales</taxon>
        <taxon>Lysobacteraceae</taxon>
        <taxon>Xanthomonas</taxon>
    </lineage>
</organism>
<accession>B0RSM5</accession>
<reference key="1">
    <citation type="journal article" date="2008" name="J. Biotechnol.">
        <title>The genome of Xanthomonas campestris pv. campestris B100 and its use for the reconstruction of metabolic pathways involved in xanthan biosynthesis.</title>
        <authorList>
            <person name="Vorhoelter F.-J."/>
            <person name="Schneiker S."/>
            <person name="Goesmann A."/>
            <person name="Krause L."/>
            <person name="Bekel T."/>
            <person name="Kaiser O."/>
            <person name="Linke B."/>
            <person name="Patschkowski T."/>
            <person name="Rueckert C."/>
            <person name="Schmid J."/>
            <person name="Sidhu V.K."/>
            <person name="Sieber V."/>
            <person name="Tauch A."/>
            <person name="Watt S.A."/>
            <person name="Weisshaar B."/>
            <person name="Becker A."/>
            <person name="Niehaus K."/>
            <person name="Puehler A."/>
        </authorList>
    </citation>
    <scope>NUCLEOTIDE SEQUENCE [LARGE SCALE GENOMIC DNA]</scope>
    <source>
        <strain>B100</strain>
    </source>
</reference>
<dbReference type="EC" id="4.2.1.109" evidence="1"/>
<dbReference type="EMBL" id="AM920689">
    <property type="protein sequence ID" value="CAP51460.1"/>
    <property type="molecule type" value="Genomic_DNA"/>
</dbReference>
<dbReference type="SMR" id="B0RSM5"/>
<dbReference type="KEGG" id="xca:xcc-b100_2107"/>
<dbReference type="HOGENOM" id="CLU_006033_4_1_6"/>
<dbReference type="UniPathway" id="UPA00904">
    <property type="reaction ID" value="UER00875"/>
</dbReference>
<dbReference type="Proteomes" id="UP000001188">
    <property type="component" value="Chromosome"/>
</dbReference>
<dbReference type="GO" id="GO:0005737">
    <property type="term" value="C:cytoplasm"/>
    <property type="evidence" value="ECO:0007669"/>
    <property type="project" value="InterPro"/>
</dbReference>
<dbReference type="GO" id="GO:0046570">
    <property type="term" value="F:methylthioribulose 1-phosphate dehydratase activity"/>
    <property type="evidence" value="ECO:0007669"/>
    <property type="project" value="UniProtKB-UniRule"/>
</dbReference>
<dbReference type="GO" id="GO:0008270">
    <property type="term" value="F:zinc ion binding"/>
    <property type="evidence" value="ECO:0007669"/>
    <property type="project" value="UniProtKB-UniRule"/>
</dbReference>
<dbReference type="GO" id="GO:0019509">
    <property type="term" value="P:L-methionine salvage from methylthioadenosine"/>
    <property type="evidence" value="ECO:0007669"/>
    <property type="project" value="UniProtKB-UniRule"/>
</dbReference>
<dbReference type="GO" id="GO:0005996">
    <property type="term" value="P:monosaccharide metabolic process"/>
    <property type="evidence" value="ECO:0007669"/>
    <property type="project" value="UniProtKB-ARBA"/>
</dbReference>
<dbReference type="FunFam" id="3.40.225.10:FF:000007">
    <property type="entry name" value="Methylthioribulose-1-phosphate dehydratase"/>
    <property type="match status" value="1"/>
</dbReference>
<dbReference type="Gene3D" id="3.40.225.10">
    <property type="entry name" value="Class II aldolase/adducin N-terminal domain"/>
    <property type="match status" value="1"/>
</dbReference>
<dbReference type="HAMAP" id="MF_01677">
    <property type="entry name" value="Salvage_MtnB"/>
    <property type="match status" value="1"/>
</dbReference>
<dbReference type="InterPro" id="IPR001303">
    <property type="entry name" value="Aldolase_II/adducin_N"/>
</dbReference>
<dbReference type="InterPro" id="IPR036409">
    <property type="entry name" value="Aldolase_II/adducin_N_sf"/>
</dbReference>
<dbReference type="InterPro" id="IPR017714">
    <property type="entry name" value="MethylthioRu-1-P_deHdtase_MtnB"/>
</dbReference>
<dbReference type="NCBIfam" id="NF006672">
    <property type="entry name" value="PRK09220.1"/>
    <property type="match status" value="1"/>
</dbReference>
<dbReference type="NCBIfam" id="TIGR03328">
    <property type="entry name" value="salvage_mtnB"/>
    <property type="match status" value="1"/>
</dbReference>
<dbReference type="PANTHER" id="PTHR10640">
    <property type="entry name" value="METHYLTHIORIBULOSE-1-PHOSPHATE DEHYDRATASE"/>
    <property type="match status" value="1"/>
</dbReference>
<dbReference type="PANTHER" id="PTHR10640:SF7">
    <property type="entry name" value="METHYLTHIORIBULOSE-1-PHOSPHATE DEHYDRATASE"/>
    <property type="match status" value="1"/>
</dbReference>
<dbReference type="Pfam" id="PF00596">
    <property type="entry name" value="Aldolase_II"/>
    <property type="match status" value="1"/>
</dbReference>
<dbReference type="SMART" id="SM01007">
    <property type="entry name" value="Aldolase_II"/>
    <property type="match status" value="1"/>
</dbReference>
<dbReference type="SUPFAM" id="SSF53639">
    <property type="entry name" value="AraD/HMP-PK domain-like"/>
    <property type="match status" value="1"/>
</dbReference>
<evidence type="ECO:0000255" key="1">
    <source>
        <dbReference type="HAMAP-Rule" id="MF_01677"/>
    </source>
</evidence>
<keyword id="KW-0028">Amino-acid biosynthesis</keyword>
<keyword id="KW-0456">Lyase</keyword>
<keyword id="KW-0479">Metal-binding</keyword>
<keyword id="KW-0486">Methionine biosynthesis</keyword>
<keyword id="KW-0862">Zinc</keyword>